<keyword id="KW-1185">Reference proteome</keyword>
<sequence length="203" mass="23960">MELLREFLRNYGERFKEELENLVKKYVQGEEDVVLLKMDERCLILPFLNVGDFFYMKARELTEPVKLEVLQKRDSEVLARAISYEETYIEKRQHVRVQPDKPIPVYIKEKDTVGSILDISVGGIGVFLKEKVVEPEEVVTLEFELEGEEIKTKGECRYTIPYRAGYRAGFKFVDLSTRYENIIGRYVMKRQMEILKELKESMI</sequence>
<evidence type="ECO:0000305" key="1"/>
<comment type="similarity">
    <text evidence="1">To A.aeolicus aq_820 and aq_1583.</text>
</comment>
<proteinExistence type="predicted"/>
<name>Y1211_AQUAE</name>
<organism>
    <name type="scientific">Aquifex aeolicus (strain VF5)</name>
    <dbReference type="NCBI Taxonomy" id="224324"/>
    <lineage>
        <taxon>Bacteria</taxon>
        <taxon>Pseudomonadati</taxon>
        <taxon>Aquificota</taxon>
        <taxon>Aquificia</taxon>
        <taxon>Aquificales</taxon>
        <taxon>Aquificaceae</taxon>
        <taxon>Aquifex</taxon>
    </lineage>
</organism>
<dbReference type="EMBL" id="AE000657">
    <property type="protein sequence ID" value="AAC07233.1"/>
    <property type="molecule type" value="Genomic_DNA"/>
</dbReference>
<dbReference type="PIR" id="E70404">
    <property type="entry name" value="E70404"/>
</dbReference>
<dbReference type="RefSeq" id="NP_213828.1">
    <property type="nucleotide sequence ID" value="NC_000918.1"/>
</dbReference>
<dbReference type="RefSeq" id="WP_010880766.1">
    <property type="nucleotide sequence ID" value="NC_000918.1"/>
</dbReference>
<dbReference type="SMR" id="O67264"/>
<dbReference type="STRING" id="224324.aq_1211"/>
<dbReference type="EnsemblBacteria" id="AAC07233">
    <property type="protein sequence ID" value="AAC07233"/>
    <property type="gene ID" value="aq_1211"/>
</dbReference>
<dbReference type="KEGG" id="aae:aq_1211"/>
<dbReference type="eggNOG" id="COG3706">
    <property type="taxonomic scope" value="Bacteria"/>
</dbReference>
<dbReference type="HOGENOM" id="CLU_1346627_0_0_0"/>
<dbReference type="InParanoid" id="O67264"/>
<dbReference type="OrthoDB" id="13949at2"/>
<dbReference type="Proteomes" id="UP000000798">
    <property type="component" value="Chromosome"/>
</dbReference>
<dbReference type="GO" id="GO:0035438">
    <property type="term" value="F:cyclic-di-GMP binding"/>
    <property type="evidence" value="ECO:0007669"/>
    <property type="project" value="InterPro"/>
</dbReference>
<dbReference type="Gene3D" id="2.40.10.220">
    <property type="entry name" value="predicted glycosyltransferase like domains"/>
    <property type="match status" value="1"/>
</dbReference>
<dbReference type="InterPro" id="IPR009875">
    <property type="entry name" value="PilZ_domain"/>
</dbReference>
<dbReference type="Pfam" id="PF07238">
    <property type="entry name" value="PilZ"/>
    <property type="match status" value="1"/>
</dbReference>
<dbReference type="SUPFAM" id="SSF141371">
    <property type="entry name" value="PilZ domain-like"/>
    <property type="match status" value="1"/>
</dbReference>
<protein>
    <recommendedName>
        <fullName>Uncharacterized protein aq_1211</fullName>
    </recommendedName>
</protein>
<accession>O67264</accession>
<gene>
    <name type="ordered locus">aq_1211</name>
</gene>
<reference key="1">
    <citation type="journal article" date="1998" name="Nature">
        <title>The complete genome of the hyperthermophilic bacterium Aquifex aeolicus.</title>
        <authorList>
            <person name="Deckert G."/>
            <person name="Warren P.V."/>
            <person name="Gaasterland T."/>
            <person name="Young W.G."/>
            <person name="Lenox A.L."/>
            <person name="Graham D.E."/>
            <person name="Overbeek R."/>
            <person name="Snead M.A."/>
            <person name="Keller M."/>
            <person name="Aujay M."/>
            <person name="Huber R."/>
            <person name="Feldman R.A."/>
            <person name="Short J.M."/>
            <person name="Olsen G.J."/>
            <person name="Swanson R.V."/>
        </authorList>
    </citation>
    <scope>NUCLEOTIDE SEQUENCE [LARGE SCALE GENOMIC DNA]</scope>
    <source>
        <strain>VF5</strain>
    </source>
</reference>
<feature type="chain" id="PRO_0000186911" description="Uncharacterized protein aq_1211">
    <location>
        <begin position="1"/>
        <end position="203"/>
    </location>
</feature>
<feature type="domain" description="PilZ">
    <location>
        <begin position="90"/>
        <end position="188"/>
    </location>
</feature>